<evidence type="ECO:0000255" key="1">
    <source>
        <dbReference type="PROSITE-ProRule" id="PRU00303"/>
    </source>
</evidence>
<evidence type="ECO:0000255" key="2">
    <source>
        <dbReference type="PROSITE-ProRule" id="PRU01060"/>
    </source>
</evidence>
<evidence type="ECO:0000256" key="3">
    <source>
        <dbReference type="SAM" id="MobiDB-lite"/>
    </source>
</evidence>
<evidence type="ECO:0000305" key="4"/>
<sequence length="1520" mass="167246">MNKKFKYKKSLLAAILSATLLAGCDGGGSGSSSDTPPVDSGTGSLPEVKPDPTPNPEPTPEPTPDPEPTPEPIPDPEPTPEPEPEPVPTKTGYLTLGGSQRVTGATCNGESSDGFTFKPGEDVTCVAGNTTIATFNTQSEAARSLRAVEKVSFSLEDAQELAGSDDKKSNAVSLVTSSNSCPANTEQVCLTFSSVIESKRFDSLYKQIDLAPEEFKKLVNEEVENNAATDKAPSTHTSPVVPVTTPGTKPDLNASFVSANAEQFYQYQPTEIILSEGRLVDSQGYGVAGVNYYTNSGRGVTGENGEFSFSWGETISFGIDTFELGSVRGNKSTIALTELGDEVRGANIDQLIHRYSTTGQNNTRVVPDDVRKVFAEYPNVINEIINLSLSNGATLGEGEQVVNLPNEFIEQFNTGQAKEIDTAICAKTDGCNEARWFSLTTRNVNDGQIQGVINKLWGVDTNYKSVSKFHVFHDSTNFYGSTGNARGQAVVNISNAAFPILMARNDKNYWLAFGEKRAWDKNELAYITEAPSLVEPENVTRDTATFNLPFISLGQVGEGKLMVIGNPHYNSILRCPNGYSWNGGVNKDGQCTLNSDPDDMKNFMENVLRYLSDDKWKPDAKASMTVGTNLDTVYFKRHGQVTGNSAAFDFHPDFAGISVEHLSSYGDLDPQEMPLLILNGFEYVTQVGNDPYAIPLRADTSKPKLTQQDVTDLIAYLNKGGSVLIMENVMSNLKEESASGFVRLLDAAGLSMALNKSVVNNDPQGYPNRVRQQRATGIWVYERYPAVDGALPYTIDSKTGEVKWKYQVENKPDDKPKLEVASWLEDVDGKQETRYAFIDEADHKTEDSLKAAKEKIFAAFPGLKECTNPAYHYEVNCLEYRPGTGVPVTGGMYVPQYTQLSLNADTAKAMVQAADLGTNIQRLYQHELYFRTNGRKGERLSSVDLERLYQNMSVWLWNDTSYRYEEGKNDELGFKTFTEFLNCYANDAYAGGTKCSADLKKSLVDNNMIYGDGSSKAGMMNPSYPLNYMEKPLTRLMLGRSWWDLNIKVDVEKYPGAVSEEGQNVTETISLYSNPTKWFAGNMQSTGLWAPAQKEVTIKSNANVPVTVTVALADDLTGREKHEVALNRPPRVTKTYSLDASGTVKFKVPYGGLIYIKGNSSTNESASFTFTGVVKAPFYKDGAWKNDLNSPAPLGELESDAFVYTTPKKNLNASNYTGGLEQFANDLDTFASSMNDFYGRDSEDGKHRMFTYKNLPGHKHRFTNDVQISIGDAHSGYPVMNSSFSPNSTTLPTTPLNDWLIWHEVGHNAAETPLTVPGATEVANNVLALYMQDRYLGKMNRVADDITVAPEYLEESNNQAWARGGAGDRLLMYAQLKEWAEKNFDIKKWYPDGTPLPEFYSEREGMKGWNLFQLMHRKARGDEVSNDKFGGKNYCAESNGNAADTLMLCASWVAQTDLSEFFKKWNPGANAYQLPGASEMSFEGGVSQSAYNTLASLDLPKPEQGPETINQVTEHKMSAE</sequence>
<accession>P0CK95</accession>
<accession>Q2M9M2</accession>
<accession>Q46837</accession>
<accession>Q46838</accession>
<accession>Q6BF58</accession>
<comment type="function">
    <text evidence="4">Involved in a type II secretion system (T2SS, formerly general secretion pathway, GSP) for the export of folded proteins across the outer membrane.</text>
</comment>
<comment type="subcellular location">
    <subcellularLocation>
        <location evidence="1">Cell inner membrane</location>
        <topology evidence="1">Lipid-anchor</topology>
    </subcellularLocation>
</comment>
<comment type="miscellaneous">
    <text evidence="4">In many other E.coli strains this gene is part of a type II secretion system, but in MG1655 the locus is missing a number of genes.</text>
</comment>
<comment type="similarity">
    <text evidence="4">To V.cholerae AcfD (VC_0845).</text>
</comment>
<comment type="sequence caution" evidence="4">
    <conflict type="frameshift">
        <sequence resource="EMBL-CDS" id="AAA69140"/>
    </conflict>
</comment>
<comment type="sequence caution" evidence="4">
    <conflict type="frameshift">
        <sequence resource="EMBL-CDS" id="AAA69141"/>
    </conflict>
</comment>
<proteinExistence type="inferred from homology"/>
<feature type="signal peptide" evidence="1">
    <location>
        <begin position="1"/>
        <end position="23"/>
    </location>
</feature>
<feature type="chain" id="PRO_0000020619" description="Putative lipoprotein AcfD homolog">
    <location>
        <begin position="24"/>
        <end position="1520"/>
    </location>
</feature>
<feature type="domain" description="Peptidase M60" evidence="2">
    <location>
        <begin position="1081"/>
        <end position="1381"/>
    </location>
</feature>
<feature type="region of interest" description="Disordered" evidence="3">
    <location>
        <begin position="22"/>
        <end position="107"/>
    </location>
</feature>
<feature type="region of interest" description="Disordered" evidence="3">
    <location>
        <begin position="226"/>
        <end position="247"/>
    </location>
</feature>
<feature type="region of interest" description="Disordered" evidence="3">
    <location>
        <begin position="1498"/>
        <end position="1520"/>
    </location>
</feature>
<feature type="compositionally biased region" description="Low complexity" evidence="3">
    <location>
        <begin position="31"/>
        <end position="42"/>
    </location>
</feature>
<feature type="compositionally biased region" description="Pro residues" evidence="3">
    <location>
        <begin position="51"/>
        <end position="77"/>
    </location>
</feature>
<feature type="compositionally biased region" description="Polar residues" evidence="3">
    <location>
        <begin position="97"/>
        <end position="107"/>
    </location>
</feature>
<feature type="compositionally biased region" description="Low complexity" evidence="3">
    <location>
        <begin position="234"/>
        <end position="247"/>
    </location>
</feature>
<feature type="lipid moiety-binding region" description="N-palmitoyl cysteine" evidence="1">
    <location>
        <position position="24"/>
    </location>
</feature>
<feature type="lipid moiety-binding region" description="S-diacylglycerol cysteine" evidence="1">
    <location>
        <position position="24"/>
    </location>
</feature>
<feature type="sequence variant" description="In strain: O15:H- / 83/39 /ETEC.">
    <original>N</original>
    <variation>G</variation>
    <location>
        <position position="1358"/>
    </location>
</feature>
<feature type="sequence variant" description="In strain: O15:H- / 83/39 / ETEC.">
    <original>DGTPLPEFYSE</original>
    <variation>EGELPKFFSD</variation>
    <location>
        <begin position="1392"/>
        <end position="1402"/>
    </location>
</feature>
<feature type="sequence variant" description="In strain: O15:H- / 83/39 / ETEC.">
    <original>EVSNDK</original>
    <variation>DVGDKT</variation>
    <location>
        <begin position="1423"/>
        <end position="1428"/>
    </location>
</feature>
<feature type="sequence variant" description="In strain: O15:H- / 83/39 /ETEC.">
    <original>D</original>
    <variation>K</variation>
    <location>
        <position position="1498"/>
    </location>
</feature>
<feature type="sequence variant" description="In strain: O15:H- / 83/39 /ETEC.">
    <original>Q</original>
    <variation>K</variation>
    <location>
        <position position="1511"/>
    </location>
</feature>
<feature type="sequence variant" description="In strain: O15:H- / 83/39 /ETEC.">
    <original>A</original>
    <variation>V</variation>
    <location>
        <position position="1519"/>
    </location>
</feature>
<organism>
    <name type="scientific">Escherichia coli (strain K12)</name>
    <dbReference type="NCBI Taxonomy" id="83333"/>
    <lineage>
        <taxon>Bacteria</taxon>
        <taxon>Pseudomonadati</taxon>
        <taxon>Pseudomonadota</taxon>
        <taxon>Gammaproteobacteria</taxon>
        <taxon>Enterobacterales</taxon>
        <taxon>Enterobacteriaceae</taxon>
        <taxon>Escherichia</taxon>
    </lineage>
</organism>
<keyword id="KW-0997">Cell inner membrane</keyword>
<keyword id="KW-1003">Cell membrane</keyword>
<keyword id="KW-0449">Lipoprotein</keyword>
<keyword id="KW-0472">Membrane</keyword>
<keyword id="KW-0564">Palmitate</keyword>
<keyword id="KW-1185">Reference proteome</keyword>
<keyword id="KW-0732">Signal</keyword>
<gene>
    <name type="primary">yghJ</name>
    <name type="ordered locus">b4466</name>
    <name type="ordered locus">JW5925</name>
    <name type="ORF">ECK2968</name>
</gene>
<name>ACFD_ECOLI</name>
<protein>
    <recommendedName>
        <fullName>Putative lipoprotein AcfD homolog</fullName>
    </recommendedName>
</protein>
<dbReference type="EMBL" id="U28377">
    <property type="protein sequence ID" value="AAA69141.1"/>
    <property type="status" value="ALT_FRAME"/>
    <property type="molecule type" value="Genomic_DNA"/>
</dbReference>
<dbReference type="EMBL" id="U28377">
    <property type="protein sequence ID" value="AAA69140.1"/>
    <property type="status" value="ALT_FRAME"/>
    <property type="molecule type" value="Genomic_DNA"/>
</dbReference>
<dbReference type="EMBL" id="U00096">
    <property type="protein sequence ID" value="AAT48156.1"/>
    <property type="molecule type" value="Genomic_DNA"/>
</dbReference>
<dbReference type="EMBL" id="AP009048">
    <property type="protein sequence ID" value="BAE77034.1"/>
    <property type="molecule type" value="Genomic_DNA"/>
</dbReference>
<dbReference type="EMBL" id="AF426313">
    <property type="protein sequence ID" value="AAL60194.1"/>
    <property type="molecule type" value="Genomic_DNA"/>
</dbReference>
<dbReference type="RefSeq" id="YP_026189.1">
    <property type="nucleotide sequence ID" value="NC_000913.3"/>
</dbReference>
<dbReference type="BioGRID" id="4262979">
    <property type="interactions" value="17"/>
</dbReference>
<dbReference type="FunCoup" id="P0CK95">
    <property type="interactions" value="10"/>
</dbReference>
<dbReference type="STRING" id="511145.b4466"/>
<dbReference type="MEROPS" id="M98.001"/>
<dbReference type="jPOST" id="P0CK95"/>
<dbReference type="PaxDb" id="511145-b4466"/>
<dbReference type="EnsemblBacteria" id="AAT48156">
    <property type="protein sequence ID" value="AAT48156"/>
    <property type="gene ID" value="b4466"/>
</dbReference>
<dbReference type="GeneID" id="2847716"/>
<dbReference type="KEGG" id="ecj:JW5925"/>
<dbReference type="KEGG" id="eco:b4466"/>
<dbReference type="KEGG" id="ecoc:C3026_16265"/>
<dbReference type="PATRIC" id="fig|1411691.4.peg.3758"/>
<dbReference type="eggNOG" id="COG3064">
    <property type="taxonomic scope" value="Bacteria"/>
</dbReference>
<dbReference type="HOGENOM" id="CLU_006312_0_0_6"/>
<dbReference type="InParanoid" id="P0CK95"/>
<dbReference type="OMA" id="VMGNARY"/>
<dbReference type="OrthoDB" id="9122461at2"/>
<dbReference type="BioCyc" id="EcoCyc:G7541-MONOMER"/>
<dbReference type="PRO" id="PR:P0CK95"/>
<dbReference type="Proteomes" id="UP000000625">
    <property type="component" value="Chromosome"/>
</dbReference>
<dbReference type="GO" id="GO:0005886">
    <property type="term" value="C:plasma membrane"/>
    <property type="evidence" value="ECO:0000318"/>
    <property type="project" value="GO_Central"/>
</dbReference>
<dbReference type="GO" id="GO:0044325">
    <property type="term" value="F:transmembrane transporter binding"/>
    <property type="evidence" value="ECO:0000318"/>
    <property type="project" value="GO_Central"/>
</dbReference>
<dbReference type="Gene3D" id="2.60.120.1250">
    <property type="entry name" value="Peptidase M60, enhancin-like domain 1"/>
    <property type="match status" value="1"/>
</dbReference>
<dbReference type="Gene3D" id="3.40.390.80">
    <property type="entry name" value="Peptidase M60, enhancin-like domain 2"/>
    <property type="match status" value="1"/>
</dbReference>
<dbReference type="Gene3D" id="1.10.390.30">
    <property type="entry name" value="Peptidase M60, enhancin-like domain 3"/>
    <property type="match status" value="1"/>
</dbReference>
<dbReference type="InterPro" id="IPR025385">
    <property type="entry name" value="DUF4092"/>
</dbReference>
<dbReference type="InterPro" id="IPR035423">
    <property type="entry name" value="M60-like_N"/>
</dbReference>
<dbReference type="InterPro" id="IPR042279">
    <property type="entry name" value="Pep_M60_3"/>
</dbReference>
<dbReference type="InterPro" id="IPR031161">
    <property type="entry name" value="Peptidase_M60_dom"/>
</dbReference>
<dbReference type="InterPro" id="IPR051244">
    <property type="entry name" value="TCAF"/>
</dbReference>
<dbReference type="NCBIfam" id="NF037973">
    <property type="entry name" value="metallo_SslE"/>
    <property type="match status" value="1"/>
</dbReference>
<dbReference type="NCBIfam" id="NF037974">
    <property type="entry name" value="SslE_AcfD_Zn_LP"/>
    <property type="match status" value="1"/>
</dbReference>
<dbReference type="PANTHER" id="PTHR15730">
    <property type="entry name" value="EXPERIMENTAL AUTOIMMUNE PROSTATITIS ANTIGEN 2-RELATED"/>
    <property type="match status" value="1"/>
</dbReference>
<dbReference type="PANTHER" id="PTHR15730:SF5">
    <property type="entry name" value="SI:CH211-210B2.2-RELATED"/>
    <property type="match status" value="1"/>
</dbReference>
<dbReference type="Pfam" id="PF13322">
    <property type="entry name" value="DUF4092"/>
    <property type="match status" value="1"/>
</dbReference>
<dbReference type="Pfam" id="PF17291">
    <property type="entry name" value="M60-like_N"/>
    <property type="match status" value="1"/>
</dbReference>
<dbReference type="Pfam" id="PF13402">
    <property type="entry name" value="Peptidase_M60"/>
    <property type="match status" value="1"/>
</dbReference>
<dbReference type="SMART" id="SM01276">
    <property type="entry name" value="M60-like"/>
    <property type="match status" value="1"/>
</dbReference>
<dbReference type="PROSITE" id="PS51723">
    <property type="entry name" value="PEPTIDASE_M60"/>
    <property type="match status" value="1"/>
</dbReference>
<dbReference type="PROSITE" id="PS51257">
    <property type="entry name" value="PROKAR_LIPOPROTEIN"/>
    <property type="match status" value="1"/>
</dbReference>
<reference key="1">
    <citation type="journal article" date="1997" name="Science">
        <title>The complete genome sequence of Escherichia coli K-12.</title>
        <authorList>
            <person name="Blattner F.R."/>
            <person name="Plunkett G. III"/>
            <person name="Bloch C.A."/>
            <person name="Perna N.T."/>
            <person name="Burland V."/>
            <person name="Riley M."/>
            <person name="Collado-Vides J."/>
            <person name="Glasner J.D."/>
            <person name="Rode C.K."/>
            <person name="Mayhew G.F."/>
            <person name="Gregor J."/>
            <person name="Davis N.W."/>
            <person name="Kirkpatrick H.A."/>
            <person name="Goeden M.A."/>
            <person name="Rose D.J."/>
            <person name="Mau B."/>
            <person name="Shao Y."/>
        </authorList>
    </citation>
    <scope>NUCLEOTIDE SEQUENCE [LARGE SCALE GENOMIC DNA]</scope>
    <source>
        <strain>K12 / MG1655 / ATCC 47076</strain>
    </source>
</reference>
<reference key="2">
    <citation type="journal article" date="2006" name="Nucleic Acids Res.">
        <title>Escherichia coli K-12: a cooperatively developed annotation snapshot -- 2005.</title>
        <authorList>
            <person name="Riley M."/>
            <person name="Abe T."/>
            <person name="Arnaud M.B."/>
            <person name="Berlyn M.K.B."/>
            <person name="Blattner F.R."/>
            <person name="Chaudhuri R.R."/>
            <person name="Glasner J.D."/>
            <person name="Horiuchi T."/>
            <person name="Keseler I.M."/>
            <person name="Kosuge T."/>
            <person name="Mori H."/>
            <person name="Perna N.T."/>
            <person name="Plunkett G. III"/>
            <person name="Rudd K.E."/>
            <person name="Serres M.H."/>
            <person name="Thomas G.H."/>
            <person name="Thomson N.R."/>
            <person name="Wishart D."/>
            <person name="Wanner B.L."/>
        </authorList>
    </citation>
    <scope>SEQUENCE REVISION</scope>
</reference>
<reference key="3">
    <citation type="journal article" date="2006" name="Mol. Syst. Biol.">
        <title>Highly accurate genome sequences of Escherichia coli K-12 strains MG1655 and W3110.</title>
        <authorList>
            <person name="Hayashi K."/>
            <person name="Morooka N."/>
            <person name="Yamamoto Y."/>
            <person name="Fujita K."/>
            <person name="Isono K."/>
            <person name="Choi S."/>
            <person name="Ohtsubo E."/>
            <person name="Baba T."/>
            <person name="Wanner B.L."/>
            <person name="Mori H."/>
            <person name="Horiuchi T."/>
        </authorList>
    </citation>
    <scope>NUCLEOTIDE SEQUENCE [LARGE SCALE GENOMIC DNA]</scope>
    <source>
        <strain>K12 / W3110 / ATCC 27325 / DSM 5911</strain>
    </source>
</reference>
<reference key="4">
    <citation type="submission" date="2001-09" db="EMBL/GenBank/DDBJ databases">
        <title>Identification of a type II protein secretory pathway required for the secretion of heat-labile enterotoxin by enterotoxigenic Escherichia coli.</title>
        <authorList>
            <person name="Tauschek M."/>
            <person name="Gorrell R.J."/>
            <person name="Strugnell R.A."/>
            <person name="Robins-Browne R.M."/>
        </authorList>
    </citation>
    <scope>NUCLEOTIDE SEQUENCE [GENOMIC DNA] OF 1321-1520</scope>
    <source>
        <strain>O15:H- / 83/39 / ETEC</strain>
    </source>
</reference>